<reference key="1">
    <citation type="journal article" date="2009" name="PLoS Pathog.">
        <title>Genomic evidence for the evolution of Streptococcus equi: host restriction, increased virulence, and genetic exchange with human pathogens.</title>
        <authorList>
            <person name="Holden M.T.G."/>
            <person name="Heather Z."/>
            <person name="Paillot R."/>
            <person name="Steward K.F."/>
            <person name="Webb K."/>
            <person name="Ainslie F."/>
            <person name="Jourdan T."/>
            <person name="Bason N.C."/>
            <person name="Holroyd N.E."/>
            <person name="Mungall K."/>
            <person name="Quail M.A."/>
            <person name="Sanders M."/>
            <person name="Simmonds M."/>
            <person name="Willey D."/>
            <person name="Brooks K."/>
            <person name="Aanensen D.M."/>
            <person name="Spratt B.G."/>
            <person name="Jolley K.A."/>
            <person name="Maiden M.C.J."/>
            <person name="Kehoe M."/>
            <person name="Chanter N."/>
            <person name="Bentley S.D."/>
            <person name="Robinson C."/>
            <person name="Maskell D.J."/>
            <person name="Parkhill J."/>
            <person name="Waller A.S."/>
        </authorList>
    </citation>
    <scope>NUCLEOTIDE SEQUENCE [LARGE SCALE GENOMIC DNA]</scope>
    <source>
        <strain>H70</strain>
    </source>
</reference>
<proteinExistence type="inferred from homology"/>
<feature type="chain" id="PRO_1000213443" description="tRNA (guanine-N(7)-)-methyltransferase">
    <location>
        <begin position="1"/>
        <end position="211"/>
    </location>
</feature>
<feature type="region of interest" description="Interaction with RNA" evidence="2">
    <location>
        <begin position="124"/>
        <end position="129"/>
    </location>
</feature>
<feature type="active site" evidence="1">
    <location>
        <position position="118"/>
    </location>
</feature>
<feature type="binding site" evidence="2">
    <location>
        <position position="44"/>
    </location>
    <ligand>
        <name>S-adenosyl-L-methionine</name>
        <dbReference type="ChEBI" id="CHEBI:59789"/>
    </ligand>
</feature>
<feature type="binding site" evidence="2">
    <location>
        <position position="69"/>
    </location>
    <ligand>
        <name>S-adenosyl-L-methionine</name>
        <dbReference type="ChEBI" id="CHEBI:59789"/>
    </ligand>
</feature>
<feature type="binding site" evidence="2">
    <location>
        <position position="96"/>
    </location>
    <ligand>
        <name>S-adenosyl-L-methionine</name>
        <dbReference type="ChEBI" id="CHEBI:59789"/>
    </ligand>
</feature>
<feature type="binding site" evidence="2">
    <location>
        <position position="118"/>
    </location>
    <ligand>
        <name>S-adenosyl-L-methionine</name>
        <dbReference type="ChEBI" id="CHEBI:59789"/>
    </ligand>
</feature>
<feature type="binding site" evidence="2">
    <location>
        <position position="122"/>
    </location>
    <ligand>
        <name>substrate</name>
    </ligand>
</feature>
<feature type="binding site" evidence="2">
    <location>
        <position position="154"/>
    </location>
    <ligand>
        <name>substrate</name>
    </ligand>
</feature>
<feature type="binding site" evidence="2">
    <location>
        <begin position="191"/>
        <end position="194"/>
    </location>
    <ligand>
        <name>substrate</name>
    </ligand>
</feature>
<keyword id="KW-0489">Methyltransferase</keyword>
<keyword id="KW-0949">S-adenosyl-L-methionine</keyword>
<keyword id="KW-0808">Transferase</keyword>
<keyword id="KW-0819">tRNA processing</keyword>
<sequence>MRVRKRKGAQEHLENNPHYVILEPEAAKGRWCEVFGNDHPIHIEVGSGKGAFITGMALKNPEINYIGIDIQLSVLSYALDKVLASQAPNVRLLRVDGSSLTNYFDAGEIDMMYLNFSDPWPKSRHEKRRLTHRSFLDTYKQILPENGEIHFKTDNRGLFEYSLASFSQYGMTLKQVWLDLHASDYQGNVMTEYEARFAKKGQVIYRLEATF</sequence>
<name>TRMB_STRS7</name>
<comment type="function">
    <text evidence="2">Catalyzes the formation of N(7)-methylguanine at position 46 (m7G46) in tRNA.</text>
</comment>
<comment type="catalytic activity">
    <reaction evidence="2">
        <text>guanosine(46) in tRNA + S-adenosyl-L-methionine = N(7)-methylguanosine(46) in tRNA + S-adenosyl-L-homocysteine</text>
        <dbReference type="Rhea" id="RHEA:42708"/>
        <dbReference type="Rhea" id="RHEA-COMP:10188"/>
        <dbReference type="Rhea" id="RHEA-COMP:10189"/>
        <dbReference type="ChEBI" id="CHEBI:57856"/>
        <dbReference type="ChEBI" id="CHEBI:59789"/>
        <dbReference type="ChEBI" id="CHEBI:74269"/>
        <dbReference type="ChEBI" id="CHEBI:74480"/>
        <dbReference type="EC" id="2.1.1.33"/>
    </reaction>
</comment>
<comment type="pathway">
    <text evidence="2">tRNA modification; N(7)-methylguanine-tRNA biosynthesis.</text>
</comment>
<comment type="similarity">
    <text evidence="2">Belongs to the class I-like SAM-binding methyltransferase superfamily. TrmB family.</text>
</comment>
<protein>
    <recommendedName>
        <fullName evidence="2">tRNA (guanine-N(7)-)-methyltransferase</fullName>
        <ecNumber evidence="2">2.1.1.33</ecNumber>
    </recommendedName>
    <alternativeName>
        <fullName evidence="2">tRNA (guanine(46)-N(7))-methyltransferase</fullName>
    </alternativeName>
    <alternativeName>
        <fullName evidence="2">tRNA(m7G46)-methyltransferase</fullName>
    </alternativeName>
</protein>
<evidence type="ECO:0000250" key="1"/>
<evidence type="ECO:0000255" key="2">
    <source>
        <dbReference type="HAMAP-Rule" id="MF_01057"/>
    </source>
</evidence>
<accession>C0MDZ0</accession>
<dbReference type="EC" id="2.1.1.33" evidence="2"/>
<dbReference type="EMBL" id="FM204884">
    <property type="protein sequence ID" value="CAX00237.1"/>
    <property type="molecule type" value="Genomic_DNA"/>
</dbReference>
<dbReference type="SMR" id="C0MDZ0"/>
<dbReference type="KEGG" id="seq:SZO_15460"/>
<dbReference type="eggNOG" id="COG0220">
    <property type="taxonomic scope" value="Bacteria"/>
</dbReference>
<dbReference type="HOGENOM" id="CLU_050910_2_1_9"/>
<dbReference type="UniPathway" id="UPA00989"/>
<dbReference type="Proteomes" id="UP000001368">
    <property type="component" value="Chromosome"/>
</dbReference>
<dbReference type="GO" id="GO:0043527">
    <property type="term" value="C:tRNA methyltransferase complex"/>
    <property type="evidence" value="ECO:0007669"/>
    <property type="project" value="TreeGrafter"/>
</dbReference>
<dbReference type="GO" id="GO:0008176">
    <property type="term" value="F:tRNA (guanine(46)-N7)-methyltransferase activity"/>
    <property type="evidence" value="ECO:0007669"/>
    <property type="project" value="UniProtKB-UniRule"/>
</dbReference>
<dbReference type="CDD" id="cd02440">
    <property type="entry name" value="AdoMet_MTases"/>
    <property type="match status" value="1"/>
</dbReference>
<dbReference type="FunFam" id="3.40.50.150:FF:000035">
    <property type="entry name" value="tRNA (guanine-N(7)-)-methyltransferase"/>
    <property type="match status" value="1"/>
</dbReference>
<dbReference type="Gene3D" id="3.40.50.150">
    <property type="entry name" value="Vaccinia Virus protein VP39"/>
    <property type="match status" value="1"/>
</dbReference>
<dbReference type="HAMAP" id="MF_01057">
    <property type="entry name" value="tRNA_methyltr_TrmB"/>
    <property type="match status" value="1"/>
</dbReference>
<dbReference type="InterPro" id="IPR029063">
    <property type="entry name" value="SAM-dependent_MTases_sf"/>
</dbReference>
<dbReference type="InterPro" id="IPR003358">
    <property type="entry name" value="tRNA_(Gua-N-7)_MeTrfase_Trmb"/>
</dbReference>
<dbReference type="InterPro" id="IPR055361">
    <property type="entry name" value="tRNA_methyltr_TrmB_bact"/>
</dbReference>
<dbReference type="NCBIfam" id="NF001080">
    <property type="entry name" value="PRK00121.2-2"/>
    <property type="match status" value="1"/>
</dbReference>
<dbReference type="NCBIfam" id="TIGR00091">
    <property type="entry name" value="tRNA (guanosine(46)-N7)-methyltransferase TrmB"/>
    <property type="match status" value="1"/>
</dbReference>
<dbReference type="PANTHER" id="PTHR23417">
    <property type="entry name" value="3-DEOXY-D-MANNO-OCTULOSONIC-ACID TRANSFERASE/TRNA GUANINE-N 7 - -METHYLTRANSFERASE"/>
    <property type="match status" value="1"/>
</dbReference>
<dbReference type="PANTHER" id="PTHR23417:SF14">
    <property type="entry name" value="PENTACOTRIPEPTIDE-REPEAT REGION OF PRORP DOMAIN-CONTAINING PROTEIN"/>
    <property type="match status" value="1"/>
</dbReference>
<dbReference type="Pfam" id="PF02390">
    <property type="entry name" value="Methyltransf_4"/>
    <property type="match status" value="1"/>
</dbReference>
<dbReference type="SUPFAM" id="SSF53335">
    <property type="entry name" value="S-adenosyl-L-methionine-dependent methyltransferases"/>
    <property type="match status" value="1"/>
</dbReference>
<dbReference type="PROSITE" id="PS51625">
    <property type="entry name" value="SAM_MT_TRMB"/>
    <property type="match status" value="1"/>
</dbReference>
<organism>
    <name type="scientific">Streptococcus equi subsp. zooepidemicus (strain H70)</name>
    <dbReference type="NCBI Taxonomy" id="553483"/>
    <lineage>
        <taxon>Bacteria</taxon>
        <taxon>Bacillati</taxon>
        <taxon>Bacillota</taxon>
        <taxon>Bacilli</taxon>
        <taxon>Lactobacillales</taxon>
        <taxon>Streptococcaceae</taxon>
        <taxon>Streptococcus</taxon>
    </lineage>
</organism>
<gene>
    <name evidence="2" type="primary">trmB</name>
    <name type="ordered locus">SZO_15460</name>
</gene>